<gene>
    <name type="primary">TBC1D1</name>
    <name type="synonym">LYN</name>
</gene>
<comment type="function">
    <text evidence="1">May act as a GTPase-activating protein for Rab family protein(s). May play a role in the cell cycle and differentiation of various tissues. Involved in the trafficking and translocation of GLUT4-containing vesicles and insulin-stimulated glucose uptake into cells (By similarity).</text>
</comment>
<comment type="subunit">
    <text evidence="3">Interacts with APPL2 (via BAR domain); interaction is dependent of TBC1D1 phosphorylation at Ser-232; interaction diminishes the phosphorylation of TBC1D1 at Thr-593, resulting in inhibition of SLC2A4/GLUT4 translocation and glucose uptake.</text>
</comment>
<comment type="subcellular location">
    <subcellularLocation>
        <location evidence="1">Nucleus</location>
    </subcellularLocation>
</comment>
<comment type="PTM">
    <text evidence="1">Insulin-stimulated phosphorylation by AKT family kinases stimulates SLC2A4/GLUT4 translocation.</text>
</comment>
<name>TBCD1_BOVIN</name>
<reference key="1">
    <citation type="journal article" date="2009" name="Genome Biol.">
        <title>A whole-genome assembly of the domestic cow, Bos taurus.</title>
        <authorList>
            <person name="Zimin A.V."/>
            <person name="Delcher A.L."/>
            <person name="Florea L."/>
            <person name="Kelley D.R."/>
            <person name="Schatz M.C."/>
            <person name="Puiu D."/>
            <person name="Hanrahan F."/>
            <person name="Pertea G."/>
            <person name="Van Tassell C.P."/>
            <person name="Sonstegard T.S."/>
            <person name="Marcais G."/>
            <person name="Roberts M."/>
            <person name="Subramanian P."/>
            <person name="Yorke J.A."/>
            <person name="Salzberg S.L."/>
        </authorList>
    </citation>
    <scope>NUCLEOTIDE SEQUENCE [LARGE SCALE GENOMIC DNA]</scope>
    <source>
        <strain>Hereford</strain>
    </source>
</reference>
<reference key="2">
    <citation type="journal article" date="1998" name="J. Biol. Chem.">
        <title>Retinal targets for calmodulin include proteins implicated in synaptic transmission.</title>
        <authorList>
            <person name="Xu X.-Z.S."/>
            <person name="Wes P.D."/>
            <person name="Chen H."/>
            <person name="Li H.-S."/>
            <person name="Yu M."/>
            <person name="Morgan S."/>
            <person name="Liu Y."/>
            <person name="Montell C."/>
        </authorList>
    </citation>
    <scope>NUCLEOTIDE SEQUENCE [MRNA] OF 610-1165</scope>
    <source>
        <tissue>Retina</tissue>
    </source>
</reference>
<proteinExistence type="evidence at transcript level"/>
<evidence type="ECO:0000250" key="1"/>
<evidence type="ECO:0000250" key="2">
    <source>
        <dbReference type="UniProtKB" id="Q60949"/>
    </source>
</evidence>
<evidence type="ECO:0000250" key="3">
    <source>
        <dbReference type="UniProtKB" id="Q86TI0"/>
    </source>
</evidence>
<evidence type="ECO:0000255" key="4">
    <source>
        <dbReference type="PROSITE-ProRule" id="PRU00148"/>
    </source>
</evidence>
<evidence type="ECO:0000255" key="5">
    <source>
        <dbReference type="PROSITE-ProRule" id="PRU00163"/>
    </source>
</evidence>
<evidence type="ECO:0000256" key="6">
    <source>
        <dbReference type="SAM" id="MobiDB-lite"/>
    </source>
</evidence>
<evidence type="ECO:0000305" key="7"/>
<protein>
    <recommendedName>
        <fullName>TBC1 domain family member 1</fullName>
    </recommendedName>
    <alternativeName>
        <fullName>Lyncein</fullName>
    </alternativeName>
</protein>
<keyword id="KW-0343">GTPase activation</keyword>
<keyword id="KW-0539">Nucleus</keyword>
<keyword id="KW-0597">Phosphoprotein</keyword>
<keyword id="KW-1185">Reference proteome</keyword>
<accession>O97790</accession>
<accession>F1MKC9</accession>
<organism>
    <name type="scientific">Bos taurus</name>
    <name type="common">Bovine</name>
    <dbReference type="NCBI Taxonomy" id="9913"/>
    <lineage>
        <taxon>Eukaryota</taxon>
        <taxon>Metazoa</taxon>
        <taxon>Chordata</taxon>
        <taxon>Craniata</taxon>
        <taxon>Vertebrata</taxon>
        <taxon>Euteleostomi</taxon>
        <taxon>Mammalia</taxon>
        <taxon>Eutheria</taxon>
        <taxon>Laurasiatheria</taxon>
        <taxon>Artiodactyla</taxon>
        <taxon>Ruminantia</taxon>
        <taxon>Pecora</taxon>
        <taxon>Bovidae</taxon>
        <taxon>Bovinae</taxon>
        <taxon>Bos</taxon>
    </lineage>
</organism>
<sequence>MEPITFTARKHPFPNEVSVDFGLQLVGSLPVHSLTTMPMLPWVVAEVRRLSGQSSKKEPGTKPVRLCVSPSGLRCEPEPGKSQQWDPLICSSIFECKPQRVHKLIHNSHDPSYFACLIKNDAANQQSICYVFKADDQTKVPEIISSIRQAGKIARQEELRCPSEFDDTFAKKFEVLFCGRVAVAHRKAPPALIDECIEGFSHVSGGFSSDQSRSALQPPGDGERGPRPMRKSFSQPGLRSLAFRKEFQDAGLRSSSFFSSFEESDIENHLISGHNIVQPTDIEENRTMLFTIGQSEVYLISPDTKKIALQKNFKEISFCSQGIRHVDHFGFICRESSGGGGFHFVCYVFQCTNEALVDEIMMTLKQAFTVAAVQQTAKAPAQLCEGCPLQGLHKLCERIEGMNSSKTKLELQKHLTTLTNQEQATIFEEVQKLRPRNEQRENELIISFLRCLYEEKQKVHIHIGEIKQTSQIAAENIGSELPSSATRFRLDMLKNKAKRSLTESLESILSRGNKARGLQEHSASLDLDSSVSSMFSNTSKEPSGYEKEALPISESCFRLLGSSDDLSSDSESQLTEEPALLSPKQGFRRRANTLSHVPVECQEPPQLVRGSPGVSQRKLVRYHSVSTETPHERKDFESKADHISDASRTPVKTRRHSWRQQIFLRVATPQKACESPKRYEDYSELGELPPRSPLEPVCEDGPFGPVPEEKKRTSHELRELWQKAILQQILLLRMEKENQKLQASENDLLNKRLKLDYEEITPCLKEVTTVWEKILSTPGRSKIKFDMEKMHSAVGQGVPRHHRGEIWKFLAEQYHLKHPFPCKQQPKDTPYKELLKQLTSQQHAILIDLGRTFPTHPYYSAQLGAGQLSLYNILKAYSLLDQEVGYCQGLSFVAGILLLHMGEEEAFNMLKFLMFDMGLRKQYRPDMIILQIQMYQLSRLLHDYHRDLYNHLEEHEIGPSLYAAPWFLTVFASQFPLGFVARVFDMIFLQGSEVIFKVALSLLGSHKPLILQHENLETIVDFIKSTLPNLGLVQMEKTISQVFETDISKQLQAYEVEYHVLQEELIDSSPLSDNQRMDKLEKTNSSLRKQNLDLLEQLQVANGRIQSLEATVEKLLTSESKLKQATLALELERSALLQTVEQLRRQTAELGSQESDPTLPKPSGD</sequence>
<dbReference type="EMBL" id="DAAA02017438">
    <property type="status" value="NOT_ANNOTATED_CDS"/>
    <property type="molecule type" value="Genomic_DNA"/>
</dbReference>
<dbReference type="EMBL" id="DAAA02017439">
    <property type="status" value="NOT_ANNOTATED_CDS"/>
    <property type="molecule type" value="Genomic_DNA"/>
</dbReference>
<dbReference type="EMBL" id="DAAA02017440">
    <property type="status" value="NOT_ANNOTATED_CDS"/>
    <property type="molecule type" value="Genomic_DNA"/>
</dbReference>
<dbReference type="EMBL" id="DAAA02017441">
    <property type="status" value="NOT_ANNOTATED_CDS"/>
    <property type="molecule type" value="Genomic_DNA"/>
</dbReference>
<dbReference type="EMBL" id="DAAA02017442">
    <property type="status" value="NOT_ANNOTATED_CDS"/>
    <property type="molecule type" value="Genomic_DNA"/>
</dbReference>
<dbReference type="EMBL" id="DAAA02017443">
    <property type="status" value="NOT_ANNOTATED_CDS"/>
    <property type="molecule type" value="Genomic_DNA"/>
</dbReference>
<dbReference type="EMBL" id="Y17923">
    <property type="protein sequence ID" value="CAA76943.1"/>
    <property type="molecule type" value="mRNA"/>
</dbReference>
<dbReference type="RefSeq" id="NP_001159996.1">
    <property type="nucleotide sequence ID" value="NM_001166524.1"/>
</dbReference>
<dbReference type="RefSeq" id="XP_005207895.1">
    <property type="nucleotide sequence ID" value="XM_005207838.5"/>
</dbReference>
<dbReference type="SMR" id="O97790"/>
<dbReference type="FunCoup" id="O97790">
    <property type="interactions" value="1108"/>
</dbReference>
<dbReference type="STRING" id="9913.ENSBTAP00000071005"/>
<dbReference type="PaxDb" id="9913-ENSBTAP00000018206"/>
<dbReference type="Ensembl" id="ENSBTAT00000018206.6">
    <property type="protein sequence ID" value="ENSBTAP00000018206.4"/>
    <property type="gene ID" value="ENSBTAG00000013699.7"/>
</dbReference>
<dbReference type="GeneID" id="282704"/>
<dbReference type="KEGG" id="bta:282704"/>
<dbReference type="CTD" id="23216"/>
<dbReference type="VEuPathDB" id="HostDB:ENSBTAG00000013699"/>
<dbReference type="VGNC" id="VGNC:35623">
    <property type="gene designation" value="TBC1D1"/>
</dbReference>
<dbReference type="eggNOG" id="KOG4436">
    <property type="taxonomic scope" value="Eukaryota"/>
</dbReference>
<dbReference type="GeneTree" id="ENSGT00940000157949"/>
<dbReference type="HOGENOM" id="CLU_005350_13_0_1"/>
<dbReference type="InParanoid" id="O97790"/>
<dbReference type="OrthoDB" id="295078at2759"/>
<dbReference type="TreeFam" id="TF317184"/>
<dbReference type="Proteomes" id="UP000009136">
    <property type="component" value="Chromosome 6"/>
</dbReference>
<dbReference type="Bgee" id="ENSBTAG00000013699">
    <property type="expression patterns" value="Expressed in myometrium and 107 other cell types or tissues"/>
</dbReference>
<dbReference type="GO" id="GO:0005634">
    <property type="term" value="C:nucleus"/>
    <property type="evidence" value="ECO:0007669"/>
    <property type="project" value="UniProtKB-SubCell"/>
</dbReference>
<dbReference type="GO" id="GO:0005096">
    <property type="term" value="F:GTPase activator activity"/>
    <property type="evidence" value="ECO:0007669"/>
    <property type="project" value="UniProtKB-KW"/>
</dbReference>
<dbReference type="CDD" id="cd00934">
    <property type="entry name" value="PTB"/>
    <property type="match status" value="1"/>
</dbReference>
<dbReference type="CDD" id="cd01269">
    <property type="entry name" value="PTB_TBC1D1_like"/>
    <property type="match status" value="1"/>
</dbReference>
<dbReference type="FunFam" id="1.10.472.80:FF:000003">
    <property type="entry name" value="Putative TBC1 domain family member 1"/>
    <property type="match status" value="1"/>
</dbReference>
<dbReference type="FunFam" id="1.10.8.270:FF:000001">
    <property type="entry name" value="TBC1 domain family member 1"/>
    <property type="match status" value="1"/>
</dbReference>
<dbReference type="FunFam" id="2.30.29.30:FF:000165">
    <property type="entry name" value="TBC1 domain family member 1 isoform X1"/>
    <property type="match status" value="1"/>
</dbReference>
<dbReference type="FunFam" id="1.10.10.2750:FF:000001">
    <property type="entry name" value="TBC1 domain family member 1 isoform X2"/>
    <property type="match status" value="1"/>
</dbReference>
<dbReference type="FunFam" id="2.30.29.30:FF:000076">
    <property type="entry name" value="TBC1 domain family member 4 isoform X1"/>
    <property type="match status" value="1"/>
</dbReference>
<dbReference type="Gene3D" id="1.10.10.2750">
    <property type="match status" value="1"/>
</dbReference>
<dbReference type="Gene3D" id="2.30.29.30">
    <property type="entry name" value="Pleckstrin-homology domain (PH domain)/Phosphotyrosine-binding domain (PTB)"/>
    <property type="match status" value="2"/>
</dbReference>
<dbReference type="Gene3D" id="1.10.8.270">
    <property type="entry name" value="putative rabgap domain of human tbc1 domain family member 14 like domains"/>
    <property type="match status" value="1"/>
</dbReference>
<dbReference type="Gene3D" id="1.10.472.80">
    <property type="entry name" value="Ypt/Rab-GAP domain of gyp1p, domain 3"/>
    <property type="match status" value="1"/>
</dbReference>
<dbReference type="InterPro" id="IPR021785">
    <property type="entry name" value="DUF3350"/>
</dbReference>
<dbReference type="InterPro" id="IPR011993">
    <property type="entry name" value="PH-like_dom_sf"/>
</dbReference>
<dbReference type="InterPro" id="IPR006020">
    <property type="entry name" value="PTB/PI_dom"/>
</dbReference>
<dbReference type="InterPro" id="IPR000195">
    <property type="entry name" value="Rab-GAP-TBC_dom"/>
</dbReference>
<dbReference type="InterPro" id="IPR035969">
    <property type="entry name" value="Rab-GAP_TBC_sf"/>
</dbReference>
<dbReference type="InterPro" id="IPR050302">
    <property type="entry name" value="Rab_GAP_TBC_domain"/>
</dbReference>
<dbReference type="PANTHER" id="PTHR47219">
    <property type="entry name" value="RAB GTPASE-ACTIVATING PROTEIN 1-LIKE"/>
    <property type="match status" value="1"/>
</dbReference>
<dbReference type="PANTHER" id="PTHR47219:SF18">
    <property type="entry name" value="TBC1 DOMAIN FAMILY MEMBER 1 ISOFORM X1"/>
    <property type="match status" value="1"/>
</dbReference>
<dbReference type="Pfam" id="PF11830">
    <property type="entry name" value="DUF3350"/>
    <property type="match status" value="1"/>
</dbReference>
<dbReference type="Pfam" id="PF00640">
    <property type="entry name" value="PID"/>
    <property type="match status" value="1"/>
</dbReference>
<dbReference type="Pfam" id="PF00566">
    <property type="entry name" value="RabGAP-TBC"/>
    <property type="match status" value="1"/>
</dbReference>
<dbReference type="SMART" id="SM00462">
    <property type="entry name" value="PTB"/>
    <property type="match status" value="2"/>
</dbReference>
<dbReference type="SMART" id="SM00164">
    <property type="entry name" value="TBC"/>
    <property type="match status" value="1"/>
</dbReference>
<dbReference type="SUPFAM" id="SSF50729">
    <property type="entry name" value="PH domain-like"/>
    <property type="match status" value="2"/>
</dbReference>
<dbReference type="SUPFAM" id="SSF47923">
    <property type="entry name" value="Ypt/Rab-GAP domain of gyp1p"/>
    <property type="match status" value="2"/>
</dbReference>
<dbReference type="PROSITE" id="PS01179">
    <property type="entry name" value="PID"/>
    <property type="match status" value="1"/>
</dbReference>
<dbReference type="PROSITE" id="PS50086">
    <property type="entry name" value="TBC_RABGAP"/>
    <property type="match status" value="1"/>
</dbReference>
<feature type="chain" id="PRO_0000208021" description="TBC1 domain family member 1">
    <location>
        <begin position="1"/>
        <end position="1165"/>
    </location>
</feature>
<feature type="domain" description="PID" evidence="4">
    <location>
        <begin position="243"/>
        <end position="401"/>
    </location>
</feature>
<feature type="domain" description="Rab-GAP TBC" evidence="5">
    <location>
        <begin position="797"/>
        <end position="991"/>
    </location>
</feature>
<feature type="region of interest" description="Disordered" evidence="6">
    <location>
        <begin position="207"/>
        <end position="234"/>
    </location>
</feature>
<feature type="region of interest" description="Disordered" evidence="6">
    <location>
        <begin position="624"/>
        <end position="651"/>
    </location>
</feature>
<feature type="region of interest" description="Disordered" evidence="6">
    <location>
        <begin position="1146"/>
        <end position="1165"/>
    </location>
</feature>
<feature type="compositionally biased region" description="Basic and acidic residues" evidence="6">
    <location>
        <begin position="629"/>
        <end position="645"/>
    </location>
</feature>
<feature type="modified residue" description="Phosphoserine" evidence="2">
    <location>
        <position position="146"/>
    </location>
</feature>
<feature type="modified residue" description="Phosphoserine; by PKB/AKT1" evidence="2">
    <location>
        <position position="232"/>
    </location>
</feature>
<feature type="modified residue" description="Phosphoserine; by AMPK" evidence="2">
    <location>
        <position position="234"/>
    </location>
</feature>
<feature type="modified residue" description="Phosphoserine" evidence="2">
    <location>
        <position position="500"/>
    </location>
</feature>
<feature type="modified residue" description="Phosphothreonine; by PKB/AKT1" evidence="2">
    <location>
        <position position="502"/>
    </location>
</feature>
<feature type="modified residue" description="Phosphoserine" evidence="3">
    <location>
        <position position="504"/>
    </location>
</feature>
<feature type="modified residue" description="Phosphoserine" evidence="2">
    <location>
        <position position="522"/>
    </location>
</feature>
<feature type="modified residue" description="Phosphoserine" evidence="2">
    <location>
        <position position="524"/>
    </location>
</feature>
<feature type="modified residue" description="Phosphoserine" evidence="3">
    <location>
        <position position="562"/>
    </location>
</feature>
<feature type="modified residue" description="Phosphoserine" evidence="2">
    <location>
        <position position="563"/>
    </location>
</feature>
<feature type="modified residue" description="Phosphoserine" evidence="3">
    <location>
        <position position="567"/>
    </location>
</feature>
<feature type="modified residue" description="Phosphoserine" evidence="2">
    <location>
        <position position="568"/>
    </location>
</feature>
<feature type="modified residue" description="Phosphoserine" evidence="3">
    <location>
        <position position="582"/>
    </location>
</feature>
<feature type="modified residue" description="Phosphothreonine" evidence="2">
    <location>
        <position position="593"/>
    </location>
</feature>
<feature type="modified residue" description="Phosphoserine" evidence="2">
    <location>
        <position position="611"/>
    </location>
</feature>
<feature type="modified residue" description="Phosphoserine; by PKB/AKT1" evidence="2">
    <location>
        <position position="624"/>
    </location>
</feature>
<feature type="modified residue" description="Phosphoserine" evidence="2">
    <location>
        <position position="692"/>
    </location>
</feature>
<feature type="modified residue" description="Phosphoserine" evidence="2">
    <location>
        <position position="938"/>
    </location>
</feature>
<feature type="modified residue" description="Phosphotyrosine" evidence="2">
    <location>
        <position position="949"/>
    </location>
</feature>
<feature type="sequence conflict" description="In Ref. 2; CAA76943." evidence="7" ref="2">
    <original>GSP</original>
    <variation>ARA</variation>
    <location>
        <begin position="610"/>
        <end position="612"/>
    </location>
</feature>